<protein>
    <recommendedName>
        <fullName>Tubulin-like protein alpha-4B</fullName>
        <ecNumber evidence="2">3.6.5.-</ecNumber>
    </recommendedName>
    <alternativeName>
        <fullName>Alpha-tubulin 4B</fullName>
    </alternativeName>
</protein>
<accession>Q9H853</accession>
<keyword id="KW-0963">Cytoplasm</keyword>
<keyword id="KW-0206">Cytoskeleton</keyword>
<keyword id="KW-0342">GTP-binding</keyword>
<keyword id="KW-0378">Hydrolase</keyword>
<keyword id="KW-0460">Magnesium</keyword>
<keyword id="KW-0479">Metal-binding</keyword>
<keyword id="KW-0493">Microtubule</keyword>
<keyword id="KW-0547">Nucleotide-binding</keyword>
<keyword id="KW-1267">Proteomics identification</keyword>
<keyword id="KW-1185">Reference proteome</keyword>
<evidence type="ECO:0000250" key="1">
    <source>
        <dbReference type="UniProtKB" id="P07437"/>
    </source>
</evidence>
<evidence type="ECO:0000250" key="2">
    <source>
        <dbReference type="UniProtKB" id="P68363"/>
    </source>
</evidence>
<evidence type="ECO:0000250" key="3">
    <source>
        <dbReference type="UniProtKB" id="P99024"/>
    </source>
</evidence>
<evidence type="ECO:0000250" key="4">
    <source>
        <dbReference type="UniProtKB" id="Q71U36"/>
    </source>
</evidence>
<evidence type="ECO:0000256" key="5">
    <source>
        <dbReference type="SAM" id="MobiDB-lite"/>
    </source>
</evidence>
<evidence type="ECO:0000305" key="6"/>
<gene>
    <name type="primary">TUBA4B</name>
    <name type="synonym">TUBA4</name>
</gene>
<name>TBA4B_HUMAN</name>
<comment type="function">
    <text evidence="2">Tubulin is the major constituent of microtubules, a cylinder consisting of laterally associated linear protofilaments composed ofalpha- and beta-tubulin heterodimers.</text>
</comment>
<comment type="catalytic activity">
    <reaction evidence="2">
        <text>GTP + H2O = GDP + phosphate + H(+)</text>
        <dbReference type="Rhea" id="RHEA:19669"/>
        <dbReference type="ChEBI" id="CHEBI:15377"/>
        <dbReference type="ChEBI" id="CHEBI:15378"/>
        <dbReference type="ChEBI" id="CHEBI:37565"/>
        <dbReference type="ChEBI" id="CHEBI:43474"/>
        <dbReference type="ChEBI" id="CHEBI:58189"/>
    </reaction>
    <physiologicalReaction direction="left-to-right" evidence="2">
        <dbReference type="Rhea" id="RHEA:19670"/>
    </physiologicalReaction>
</comment>
<comment type="cofactor">
    <cofactor evidence="2">
        <name>Mg(2+)</name>
        <dbReference type="ChEBI" id="CHEBI:18420"/>
    </cofactor>
</comment>
<comment type="subcellular location">
    <subcellularLocation>
        <location evidence="6">Cytoplasm</location>
        <location evidence="6">Cytoskeleton</location>
    </subcellularLocation>
</comment>
<comment type="PTM">
    <text evidence="3 4">Some glutamate residues at the C-terminus are polyglutamylated, resulting in polyglutamate chains on the gamma-carboxyl group. Polyglutamylation plays a key role in microtubule severing by spastin (SPAST). SPAST preferentially recognizes and acts on microtubules decorated with short polyglutamate tails: severing activity by SPAST increases as the number of glutamates per tubulin rises from one to eight, but decreases beyond this glutamylation threshold. Glutamylation is also involved in cilia motility (By similarity).</text>
</comment>
<comment type="PTM">
    <text evidence="1">Some glutamate residues at the C-terminus are monoglycylated but not polyglycylated due to the absence of functional TTLL10 in human. Monoglycylation is mainly limited to tubulin incorporated into cilia and flagella axonemes, which is required for their stability and maintenance. Flagella glycylation controls sperm motility. Both polyglutamylation and monoglycylation can coexist on the same protein on adjacent residues, and lowering glycylation levels increases polyglutamylation, and reciprocally.</text>
</comment>
<comment type="similarity">
    <text evidence="6">Belongs to the tubulin family.</text>
</comment>
<proteinExistence type="evidence at protein level"/>
<sequence length="241" mass="27551">MRHQQTERQDPSQPLSRQHGTYRQIFHPEQLITGKEDAANNYAWGHYTIGKEFIDLLLDRIRKLADQCTGLQGFLVFHSLGRGTGSDVTSFLMEWLSVNYGKKSKLGFSIYPAPQVSTAMVQPYNSILTTHTTLEHSDCAFMVDNKAIYDICHCNLDIERPTYTNLNRLISQIVSSITASLRFDGALNVDLTEFQTNLVSYLTSTSPWPPMHQSSLQKRYTTSSCWWQRLPMPALSLPTRW</sequence>
<dbReference type="EC" id="3.6.5.-" evidence="2"/>
<dbReference type="EMBL" id="AK024002">
    <property type="protein sequence ID" value="BAB14767.1"/>
    <property type="molecule type" value="mRNA"/>
</dbReference>
<dbReference type="EMBL" id="AC068946">
    <property type="status" value="NOT_ANNOTATED_CDS"/>
    <property type="molecule type" value="Genomic_DNA"/>
</dbReference>
<dbReference type="CCDS" id="CCDS86922.1"/>
<dbReference type="RefSeq" id="NP_001342150.1">
    <property type="nucleotide sequence ID" value="NM_001355221.1"/>
</dbReference>
<dbReference type="SMR" id="Q9H853"/>
<dbReference type="FunCoup" id="Q9H853">
    <property type="interactions" value="58"/>
</dbReference>
<dbReference type="IntAct" id="Q9H853">
    <property type="interactions" value="10"/>
</dbReference>
<dbReference type="MINT" id="Q9H853"/>
<dbReference type="STRING" id="9606.ENSP00000487719"/>
<dbReference type="ChEMBL" id="CHEMBL4295944"/>
<dbReference type="DrugBank" id="DB05147">
    <property type="generic name" value="CYT997"/>
</dbReference>
<dbReference type="iPTMnet" id="Q9H853"/>
<dbReference type="PhosphoSitePlus" id="Q9H853"/>
<dbReference type="BioMuta" id="TUBA4B"/>
<dbReference type="DMDM" id="187663995"/>
<dbReference type="jPOST" id="Q9H853"/>
<dbReference type="MassIVE" id="Q9H853"/>
<dbReference type="PeptideAtlas" id="Q9H853"/>
<dbReference type="ProteomicsDB" id="81178"/>
<dbReference type="Ensembl" id="ENST00000490341.3">
    <property type="protein sequence ID" value="ENSP00000487719.1"/>
    <property type="gene ID" value="ENSG00000243910.9"/>
</dbReference>
<dbReference type="GeneID" id="80086"/>
<dbReference type="MANE-Select" id="ENST00000490341.3">
    <property type="protein sequence ID" value="ENSP00000487719.1"/>
    <property type="RefSeq nucleotide sequence ID" value="NM_001355221.1"/>
    <property type="RefSeq protein sequence ID" value="NP_001342150.1"/>
</dbReference>
<dbReference type="AGR" id="HGNC:18637"/>
<dbReference type="GeneCards" id="TUBA4B"/>
<dbReference type="HGNC" id="HGNC:18637">
    <property type="gene designation" value="TUBA4B"/>
</dbReference>
<dbReference type="HPA" id="ENSG00000243910">
    <property type="expression patterns" value="Group enriched (choroid plexus, fallopian tube)"/>
</dbReference>
<dbReference type="neXtProt" id="NX_Q9H853"/>
<dbReference type="OpenTargets" id="ENSG00000243910"/>
<dbReference type="VEuPathDB" id="HostDB:ENSG00000243910"/>
<dbReference type="GeneTree" id="ENSGT00940000154457"/>
<dbReference type="HOGENOM" id="CLU_015718_4_2_1"/>
<dbReference type="InParanoid" id="Q9H853"/>
<dbReference type="OMA" id="TTSSCWW"/>
<dbReference type="OrthoDB" id="9606970at2759"/>
<dbReference type="PAN-GO" id="Q9H853">
    <property type="GO annotations" value="6 GO annotations based on evolutionary models"/>
</dbReference>
<dbReference type="PhylomeDB" id="Q9H853"/>
<dbReference type="PathwayCommons" id="Q9H853"/>
<dbReference type="Reactome" id="R-HSA-1445148">
    <property type="pathway name" value="Translocation of SLC2A4 (GLUT4) to the plasma membrane"/>
</dbReference>
<dbReference type="Reactome" id="R-HSA-190840">
    <property type="pathway name" value="Microtubule-dependent trafficking of connexons from Golgi to the plasma membrane"/>
</dbReference>
<dbReference type="Reactome" id="R-HSA-190861">
    <property type="pathway name" value="Gap junction assembly"/>
</dbReference>
<dbReference type="Reactome" id="R-HSA-2132295">
    <property type="pathway name" value="MHC class II antigen presentation"/>
</dbReference>
<dbReference type="Reactome" id="R-HSA-2467813">
    <property type="pathway name" value="Separation of Sister Chromatids"/>
</dbReference>
<dbReference type="Reactome" id="R-HSA-2500257">
    <property type="pathway name" value="Resolution of Sister Chromatid Cohesion"/>
</dbReference>
<dbReference type="Reactome" id="R-HSA-3371497">
    <property type="pathway name" value="HSP90 chaperone cycle for steroid hormone receptors (SHR) in the presence of ligand"/>
</dbReference>
<dbReference type="Reactome" id="R-HSA-380320">
    <property type="pathway name" value="Recruitment of NuMA to mitotic centrosomes"/>
</dbReference>
<dbReference type="Reactome" id="R-HSA-389960">
    <property type="pathway name" value="Formation of tubulin folding intermediates by CCT/TriC"/>
</dbReference>
<dbReference type="Reactome" id="R-HSA-389977">
    <property type="pathway name" value="Post-chaperonin tubulin folding pathway"/>
</dbReference>
<dbReference type="Reactome" id="R-HSA-437239">
    <property type="pathway name" value="Recycling pathway of L1"/>
</dbReference>
<dbReference type="Reactome" id="R-HSA-5626467">
    <property type="pathway name" value="RHO GTPases activate IQGAPs"/>
</dbReference>
<dbReference type="Reactome" id="R-HSA-5663220">
    <property type="pathway name" value="RHO GTPases Activate Formins"/>
</dbReference>
<dbReference type="Reactome" id="R-HSA-6807878">
    <property type="pathway name" value="COPI-mediated anterograde transport"/>
</dbReference>
<dbReference type="Reactome" id="R-HSA-6811434">
    <property type="pathway name" value="COPI-dependent Golgi-to-ER retrograde traffic"/>
</dbReference>
<dbReference type="Reactome" id="R-HSA-6811436">
    <property type="pathway name" value="COPI-independent Golgi-to-ER retrograde traffic"/>
</dbReference>
<dbReference type="Reactome" id="R-HSA-68877">
    <property type="pathway name" value="Mitotic Prometaphase"/>
</dbReference>
<dbReference type="Reactome" id="R-HSA-8852276">
    <property type="pathway name" value="The role of GTSE1 in G2/M progression after G2 checkpoint"/>
</dbReference>
<dbReference type="Reactome" id="R-HSA-8955332">
    <property type="pathway name" value="Carboxyterminal post-translational modifications of tubulin"/>
</dbReference>
<dbReference type="Reactome" id="R-HSA-9609690">
    <property type="pathway name" value="HCMV Early Events"/>
</dbReference>
<dbReference type="Reactome" id="R-HSA-9609736">
    <property type="pathway name" value="Assembly and cell surface presentation of NMDA receptors"/>
</dbReference>
<dbReference type="Reactome" id="R-HSA-9619483">
    <property type="pathway name" value="Activation of AMPK downstream of NMDARs"/>
</dbReference>
<dbReference type="Reactome" id="R-HSA-9646399">
    <property type="pathway name" value="Aggrephagy"/>
</dbReference>
<dbReference type="Reactome" id="R-HSA-9648025">
    <property type="pathway name" value="EML4 and NUDC in mitotic spindle formation"/>
</dbReference>
<dbReference type="Reactome" id="R-HSA-9668328">
    <property type="pathway name" value="Sealing of the nuclear envelope (NE) by ESCRT-III"/>
</dbReference>
<dbReference type="Reactome" id="R-HSA-983189">
    <property type="pathway name" value="Kinesins"/>
</dbReference>
<dbReference type="Reactome" id="R-HSA-9833482">
    <property type="pathway name" value="PKR-mediated signaling"/>
</dbReference>
<dbReference type="SignaLink" id="Q9H853"/>
<dbReference type="SIGNOR" id="Q9H853"/>
<dbReference type="Pharos" id="Q9H853">
    <property type="development level" value="Tdark"/>
</dbReference>
<dbReference type="PRO" id="PR:Q9H853"/>
<dbReference type="Proteomes" id="UP000005640">
    <property type="component" value="Chromosome 2"/>
</dbReference>
<dbReference type="RNAct" id="Q9H853">
    <property type="molecule type" value="protein"/>
</dbReference>
<dbReference type="Bgee" id="ENSG00000243910">
    <property type="expression patterns" value="Expressed in right uterine tube and 153 other cell types or tissues"/>
</dbReference>
<dbReference type="GO" id="GO:0005737">
    <property type="term" value="C:cytoplasm"/>
    <property type="evidence" value="ECO:0007669"/>
    <property type="project" value="UniProtKB-KW"/>
</dbReference>
<dbReference type="GO" id="GO:0005874">
    <property type="term" value="C:microtubule"/>
    <property type="evidence" value="ECO:0007669"/>
    <property type="project" value="UniProtKB-KW"/>
</dbReference>
<dbReference type="GO" id="GO:0005525">
    <property type="term" value="F:GTP binding"/>
    <property type="evidence" value="ECO:0007669"/>
    <property type="project" value="UniProtKB-KW"/>
</dbReference>
<dbReference type="GO" id="GO:0016787">
    <property type="term" value="F:hydrolase activity"/>
    <property type="evidence" value="ECO:0007669"/>
    <property type="project" value="UniProtKB-KW"/>
</dbReference>
<dbReference type="GO" id="GO:0046872">
    <property type="term" value="F:metal ion binding"/>
    <property type="evidence" value="ECO:0007669"/>
    <property type="project" value="UniProtKB-KW"/>
</dbReference>
<dbReference type="GO" id="GO:0005200">
    <property type="term" value="F:structural constituent of cytoskeleton"/>
    <property type="evidence" value="ECO:0007669"/>
    <property type="project" value="InterPro"/>
</dbReference>
<dbReference type="GO" id="GO:0007017">
    <property type="term" value="P:microtubule-based process"/>
    <property type="evidence" value="ECO:0007669"/>
    <property type="project" value="InterPro"/>
</dbReference>
<dbReference type="FunFam" id="3.40.50.1440:FF:000007">
    <property type="entry name" value="Tubulin alpha chain"/>
    <property type="match status" value="1"/>
</dbReference>
<dbReference type="Gene3D" id="3.40.50.1440">
    <property type="entry name" value="Tubulin/FtsZ, GTPase domain"/>
    <property type="match status" value="1"/>
</dbReference>
<dbReference type="InterPro" id="IPR002452">
    <property type="entry name" value="Alpha_tubulin"/>
</dbReference>
<dbReference type="InterPro" id="IPR000217">
    <property type="entry name" value="Tubulin"/>
</dbReference>
<dbReference type="InterPro" id="IPR036525">
    <property type="entry name" value="Tubulin/FtsZ_GTPase_sf"/>
</dbReference>
<dbReference type="InterPro" id="IPR003008">
    <property type="entry name" value="Tubulin_FtsZ_GTPase"/>
</dbReference>
<dbReference type="PANTHER" id="PTHR11588">
    <property type="entry name" value="TUBULIN"/>
    <property type="match status" value="1"/>
</dbReference>
<dbReference type="Pfam" id="PF00091">
    <property type="entry name" value="Tubulin"/>
    <property type="match status" value="1"/>
</dbReference>
<dbReference type="PRINTS" id="PR01162">
    <property type="entry name" value="ALPHATUBULIN"/>
</dbReference>
<dbReference type="PRINTS" id="PR01161">
    <property type="entry name" value="TUBULIN"/>
</dbReference>
<dbReference type="SMART" id="SM00864">
    <property type="entry name" value="Tubulin"/>
    <property type="match status" value="1"/>
</dbReference>
<dbReference type="SUPFAM" id="SSF52490">
    <property type="entry name" value="Tubulin nucleotide-binding domain-like"/>
    <property type="match status" value="1"/>
</dbReference>
<feature type="chain" id="PRO_0000331573" description="Tubulin-like protein alpha-4B">
    <location>
        <begin position="1"/>
        <end position="241"/>
    </location>
</feature>
<feature type="region of interest" description="Disordered" evidence="5">
    <location>
        <begin position="1"/>
        <end position="20"/>
    </location>
</feature>
<feature type="compositionally biased region" description="Basic and acidic residues" evidence="5">
    <location>
        <begin position="1"/>
        <end position="10"/>
    </location>
</feature>
<feature type="compositionally biased region" description="Polar residues" evidence="5">
    <location>
        <begin position="11"/>
        <end position="20"/>
    </location>
</feature>
<feature type="active site" evidence="2">
    <location>
        <position position="193"/>
    </location>
</feature>
<feature type="binding site" evidence="2">
    <location>
        <position position="10"/>
    </location>
    <ligand>
        <name>GTP</name>
        <dbReference type="ChEBI" id="CHEBI:37565"/>
    </ligand>
</feature>
<feature type="binding site" evidence="2">
    <location>
        <position position="10"/>
    </location>
    <ligand>
        <name>Mg(2+)</name>
        <dbReference type="ChEBI" id="CHEBI:18420"/>
    </ligand>
</feature>
<feature type="binding site" evidence="2">
    <location>
        <position position="79"/>
    </location>
    <ligand>
        <name>GTP</name>
        <dbReference type="ChEBI" id="CHEBI:37565"/>
    </ligand>
</feature>
<feature type="binding site" evidence="2">
    <location>
        <position position="83"/>
    </location>
    <ligand>
        <name>GTP</name>
        <dbReference type="ChEBI" id="CHEBI:37565"/>
    </ligand>
</feature>
<feature type="binding site" evidence="2">
    <location>
        <position position="84"/>
    </location>
    <ligand>
        <name>GTP</name>
        <dbReference type="ChEBI" id="CHEBI:37565"/>
    </ligand>
</feature>
<feature type="binding site" evidence="2">
    <location>
        <position position="118"/>
    </location>
    <ligand>
        <name>GTP</name>
        <dbReference type="ChEBI" id="CHEBI:37565"/>
    </ligand>
</feature>
<feature type="binding site" evidence="2">
    <location>
        <position position="145"/>
    </location>
    <ligand>
        <name>GTP</name>
        <dbReference type="ChEBI" id="CHEBI:37565"/>
    </ligand>
</feature>
<feature type="binding site" evidence="2">
    <location>
        <position position="167"/>
    </location>
    <ligand>
        <name>GTP</name>
        <dbReference type="ChEBI" id="CHEBI:37565"/>
    </ligand>
</feature>
<feature type="sequence conflict" description="In Ref. 1; BAB14767." evidence="6" ref="1">
    <original>C</original>
    <variation>R</variation>
    <location>
        <position position="154"/>
    </location>
</feature>
<feature type="sequence conflict" description="In Ref. 1; BAB14767." evidence="6" ref="1">
    <original>R</original>
    <variation>K</variation>
    <location>
        <position position="219"/>
    </location>
</feature>
<feature type="sequence conflict" description="In Ref. 1; BAB14767." evidence="6" ref="1">
    <original>W</original>
    <variation>R</variation>
    <location>
        <position position="226"/>
    </location>
</feature>
<organism>
    <name type="scientific">Homo sapiens</name>
    <name type="common">Human</name>
    <dbReference type="NCBI Taxonomy" id="9606"/>
    <lineage>
        <taxon>Eukaryota</taxon>
        <taxon>Metazoa</taxon>
        <taxon>Chordata</taxon>
        <taxon>Craniata</taxon>
        <taxon>Vertebrata</taxon>
        <taxon>Euteleostomi</taxon>
        <taxon>Mammalia</taxon>
        <taxon>Eutheria</taxon>
        <taxon>Euarchontoglires</taxon>
        <taxon>Primates</taxon>
        <taxon>Haplorrhini</taxon>
        <taxon>Catarrhini</taxon>
        <taxon>Hominidae</taxon>
        <taxon>Homo</taxon>
    </lineage>
</organism>
<reference key="1">
    <citation type="journal article" date="2004" name="Nat. Genet.">
        <title>Complete sequencing and characterization of 21,243 full-length human cDNAs.</title>
        <authorList>
            <person name="Ota T."/>
            <person name="Suzuki Y."/>
            <person name="Nishikawa T."/>
            <person name="Otsuki T."/>
            <person name="Sugiyama T."/>
            <person name="Irie R."/>
            <person name="Wakamatsu A."/>
            <person name="Hayashi K."/>
            <person name="Sato H."/>
            <person name="Nagai K."/>
            <person name="Kimura K."/>
            <person name="Makita H."/>
            <person name="Sekine M."/>
            <person name="Obayashi M."/>
            <person name="Nishi T."/>
            <person name="Shibahara T."/>
            <person name="Tanaka T."/>
            <person name="Ishii S."/>
            <person name="Yamamoto J."/>
            <person name="Saito K."/>
            <person name="Kawai Y."/>
            <person name="Isono Y."/>
            <person name="Nakamura Y."/>
            <person name="Nagahari K."/>
            <person name="Murakami K."/>
            <person name="Yasuda T."/>
            <person name="Iwayanagi T."/>
            <person name="Wagatsuma M."/>
            <person name="Shiratori A."/>
            <person name="Sudo H."/>
            <person name="Hosoiri T."/>
            <person name="Kaku Y."/>
            <person name="Kodaira H."/>
            <person name="Kondo H."/>
            <person name="Sugawara M."/>
            <person name="Takahashi M."/>
            <person name="Kanda K."/>
            <person name="Yokoi T."/>
            <person name="Furuya T."/>
            <person name="Kikkawa E."/>
            <person name="Omura Y."/>
            <person name="Abe K."/>
            <person name="Kamihara K."/>
            <person name="Katsuta N."/>
            <person name="Sato K."/>
            <person name="Tanikawa M."/>
            <person name="Yamazaki M."/>
            <person name="Ninomiya K."/>
            <person name="Ishibashi T."/>
            <person name="Yamashita H."/>
            <person name="Murakawa K."/>
            <person name="Fujimori K."/>
            <person name="Tanai H."/>
            <person name="Kimata M."/>
            <person name="Watanabe M."/>
            <person name="Hiraoka S."/>
            <person name="Chiba Y."/>
            <person name="Ishida S."/>
            <person name="Ono Y."/>
            <person name="Takiguchi S."/>
            <person name="Watanabe S."/>
            <person name="Yosida M."/>
            <person name="Hotuta T."/>
            <person name="Kusano J."/>
            <person name="Kanehori K."/>
            <person name="Takahashi-Fujii A."/>
            <person name="Hara H."/>
            <person name="Tanase T.-O."/>
            <person name="Nomura Y."/>
            <person name="Togiya S."/>
            <person name="Komai F."/>
            <person name="Hara R."/>
            <person name="Takeuchi K."/>
            <person name="Arita M."/>
            <person name="Imose N."/>
            <person name="Musashino K."/>
            <person name="Yuuki H."/>
            <person name="Oshima A."/>
            <person name="Sasaki N."/>
            <person name="Aotsuka S."/>
            <person name="Yoshikawa Y."/>
            <person name="Matsunawa H."/>
            <person name="Ichihara T."/>
            <person name="Shiohata N."/>
            <person name="Sano S."/>
            <person name="Moriya S."/>
            <person name="Momiyama H."/>
            <person name="Satoh N."/>
            <person name="Takami S."/>
            <person name="Terashima Y."/>
            <person name="Suzuki O."/>
            <person name="Nakagawa S."/>
            <person name="Senoh A."/>
            <person name="Mizoguchi H."/>
            <person name="Goto Y."/>
            <person name="Shimizu F."/>
            <person name="Wakebe H."/>
            <person name="Hishigaki H."/>
            <person name="Watanabe T."/>
            <person name="Sugiyama A."/>
            <person name="Takemoto M."/>
            <person name="Kawakami B."/>
            <person name="Yamazaki M."/>
            <person name="Watanabe K."/>
            <person name="Kumagai A."/>
            <person name="Itakura S."/>
            <person name="Fukuzumi Y."/>
            <person name="Fujimori Y."/>
            <person name="Komiyama M."/>
            <person name="Tashiro H."/>
            <person name="Tanigami A."/>
            <person name="Fujiwara T."/>
            <person name="Ono T."/>
            <person name="Yamada K."/>
            <person name="Fujii Y."/>
            <person name="Ozaki K."/>
            <person name="Hirao M."/>
            <person name="Ohmori Y."/>
            <person name="Kawabata A."/>
            <person name="Hikiji T."/>
            <person name="Kobatake N."/>
            <person name="Inagaki H."/>
            <person name="Ikema Y."/>
            <person name="Okamoto S."/>
            <person name="Okitani R."/>
            <person name="Kawakami T."/>
            <person name="Noguchi S."/>
            <person name="Itoh T."/>
            <person name="Shigeta K."/>
            <person name="Senba T."/>
            <person name="Matsumura K."/>
            <person name="Nakajima Y."/>
            <person name="Mizuno T."/>
            <person name="Morinaga M."/>
            <person name="Sasaki M."/>
            <person name="Togashi T."/>
            <person name="Oyama M."/>
            <person name="Hata H."/>
            <person name="Watanabe M."/>
            <person name="Komatsu T."/>
            <person name="Mizushima-Sugano J."/>
            <person name="Satoh T."/>
            <person name="Shirai Y."/>
            <person name="Takahashi Y."/>
            <person name="Nakagawa K."/>
            <person name="Okumura K."/>
            <person name="Nagase T."/>
            <person name="Nomura N."/>
            <person name="Kikuchi H."/>
            <person name="Masuho Y."/>
            <person name="Yamashita R."/>
            <person name="Nakai K."/>
            <person name="Yada T."/>
            <person name="Nakamura Y."/>
            <person name="Ohara O."/>
            <person name="Isogai T."/>
            <person name="Sugano S."/>
        </authorList>
    </citation>
    <scope>NUCLEOTIDE SEQUENCE [LARGE SCALE MRNA]</scope>
</reference>
<reference key="2">
    <citation type="journal article" date="2005" name="Nature">
        <title>Generation and annotation of the DNA sequences of human chromosomes 2 and 4.</title>
        <authorList>
            <person name="Hillier L.W."/>
            <person name="Graves T.A."/>
            <person name="Fulton R.S."/>
            <person name="Fulton L.A."/>
            <person name="Pepin K.H."/>
            <person name="Minx P."/>
            <person name="Wagner-McPherson C."/>
            <person name="Layman D."/>
            <person name="Wylie K."/>
            <person name="Sekhon M."/>
            <person name="Becker M.C."/>
            <person name="Fewell G.A."/>
            <person name="Delehaunty K.D."/>
            <person name="Miner T.L."/>
            <person name="Nash W.E."/>
            <person name="Kremitzki C."/>
            <person name="Oddy L."/>
            <person name="Du H."/>
            <person name="Sun H."/>
            <person name="Bradshaw-Cordum H."/>
            <person name="Ali J."/>
            <person name="Carter J."/>
            <person name="Cordes M."/>
            <person name="Harris A."/>
            <person name="Isak A."/>
            <person name="van Brunt A."/>
            <person name="Nguyen C."/>
            <person name="Du F."/>
            <person name="Courtney L."/>
            <person name="Kalicki J."/>
            <person name="Ozersky P."/>
            <person name="Abbott S."/>
            <person name="Armstrong J."/>
            <person name="Belter E.A."/>
            <person name="Caruso L."/>
            <person name="Cedroni M."/>
            <person name="Cotton M."/>
            <person name="Davidson T."/>
            <person name="Desai A."/>
            <person name="Elliott G."/>
            <person name="Erb T."/>
            <person name="Fronick C."/>
            <person name="Gaige T."/>
            <person name="Haakenson W."/>
            <person name="Haglund K."/>
            <person name="Holmes A."/>
            <person name="Harkins R."/>
            <person name="Kim K."/>
            <person name="Kruchowski S.S."/>
            <person name="Strong C.M."/>
            <person name="Grewal N."/>
            <person name="Goyea E."/>
            <person name="Hou S."/>
            <person name="Levy A."/>
            <person name="Martinka S."/>
            <person name="Mead K."/>
            <person name="McLellan M.D."/>
            <person name="Meyer R."/>
            <person name="Randall-Maher J."/>
            <person name="Tomlinson C."/>
            <person name="Dauphin-Kohlberg S."/>
            <person name="Kozlowicz-Reilly A."/>
            <person name="Shah N."/>
            <person name="Swearengen-Shahid S."/>
            <person name="Snider J."/>
            <person name="Strong J.T."/>
            <person name="Thompson J."/>
            <person name="Yoakum M."/>
            <person name="Leonard S."/>
            <person name="Pearman C."/>
            <person name="Trani L."/>
            <person name="Radionenko M."/>
            <person name="Waligorski J.E."/>
            <person name="Wang C."/>
            <person name="Rock S.M."/>
            <person name="Tin-Wollam A.-M."/>
            <person name="Maupin R."/>
            <person name="Latreille P."/>
            <person name="Wendl M.C."/>
            <person name="Yang S.-P."/>
            <person name="Pohl C."/>
            <person name="Wallis J.W."/>
            <person name="Spieth J."/>
            <person name="Bieri T.A."/>
            <person name="Berkowicz N."/>
            <person name="Nelson J.O."/>
            <person name="Osborne J."/>
            <person name="Ding L."/>
            <person name="Meyer R."/>
            <person name="Sabo A."/>
            <person name="Shotland Y."/>
            <person name="Sinha P."/>
            <person name="Wohldmann P.E."/>
            <person name="Cook L.L."/>
            <person name="Hickenbotham M.T."/>
            <person name="Eldred J."/>
            <person name="Williams D."/>
            <person name="Jones T.A."/>
            <person name="She X."/>
            <person name="Ciccarelli F.D."/>
            <person name="Izaurralde E."/>
            <person name="Taylor J."/>
            <person name="Schmutz J."/>
            <person name="Myers R.M."/>
            <person name="Cox D.R."/>
            <person name="Huang X."/>
            <person name="McPherson J.D."/>
            <person name="Mardis E.R."/>
            <person name="Clifton S.W."/>
            <person name="Warren W.C."/>
            <person name="Chinwalla A.T."/>
            <person name="Eddy S.R."/>
            <person name="Marra M.A."/>
            <person name="Ovcharenko I."/>
            <person name="Furey T.S."/>
            <person name="Miller W."/>
            <person name="Eichler E.E."/>
            <person name="Bork P."/>
            <person name="Suyama M."/>
            <person name="Torrents D."/>
            <person name="Waterston R.H."/>
            <person name="Wilson R.K."/>
        </authorList>
    </citation>
    <scope>NUCLEOTIDE SEQUENCE [LARGE SCALE GENOMIC DNA]</scope>
</reference>